<dbReference type="EMBL" id="BC083291">
    <property type="protein sequence ID" value="AAH83291.1"/>
    <property type="molecule type" value="mRNA"/>
</dbReference>
<dbReference type="RefSeq" id="NP_001006048.1">
    <property type="nucleotide sequence ID" value="NM_001006048.1"/>
</dbReference>
<dbReference type="SMR" id="Q5XJK9"/>
<dbReference type="FunCoup" id="Q5XJK9">
    <property type="interactions" value="718"/>
</dbReference>
<dbReference type="STRING" id="7955.ENSDARP00000018592"/>
<dbReference type="PaxDb" id="7955-ENSDARP00000018592"/>
<dbReference type="DNASU" id="450027"/>
<dbReference type="GeneID" id="450027"/>
<dbReference type="KEGG" id="dre:450027"/>
<dbReference type="AGR" id="ZFIN:ZDB-GENE-041010-146"/>
<dbReference type="CTD" id="84319"/>
<dbReference type="ZFIN" id="ZDB-GENE-041010-146">
    <property type="gene designation" value="cmss1"/>
</dbReference>
<dbReference type="eggNOG" id="KOG3089">
    <property type="taxonomic scope" value="Eukaryota"/>
</dbReference>
<dbReference type="InParanoid" id="Q5XJK9"/>
<dbReference type="OrthoDB" id="1929311at2759"/>
<dbReference type="PhylomeDB" id="Q5XJK9"/>
<dbReference type="PRO" id="PR:Q5XJK9"/>
<dbReference type="Proteomes" id="UP000000437">
    <property type="component" value="Alternate scaffold 9"/>
</dbReference>
<dbReference type="Proteomes" id="UP000000437">
    <property type="component" value="Chromosome 9"/>
</dbReference>
<dbReference type="Gene3D" id="3.40.50.300">
    <property type="entry name" value="P-loop containing nucleotide triphosphate hydrolases"/>
    <property type="match status" value="1"/>
</dbReference>
<dbReference type="InterPro" id="IPR032704">
    <property type="entry name" value="Cms1"/>
</dbReference>
<dbReference type="InterPro" id="IPR027417">
    <property type="entry name" value="P-loop_NTPase"/>
</dbReference>
<dbReference type="PANTHER" id="PTHR24030">
    <property type="entry name" value="PROTEIN CMSS1"/>
    <property type="match status" value="1"/>
</dbReference>
<dbReference type="PANTHER" id="PTHR24030:SF0">
    <property type="entry name" value="PROTEIN CMSS1"/>
    <property type="match status" value="1"/>
</dbReference>
<dbReference type="Pfam" id="PF14617">
    <property type="entry name" value="CMS1"/>
    <property type="match status" value="1"/>
</dbReference>
<dbReference type="SUPFAM" id="SSF52540">
    <property type="entry name" value="P-loop containing nucleoside triphosphate hydrolases"/>
    <property type="match status" value="1"/>
</dbReference>
<accession>Q5XJK9</accession>
<organism>
    <name type="scientific">Danio rerio</name>
    <name type="common">Zebrafish</name>
    <name type="synonym">Brachydanio rerio</name>
    <dbReference type="NCBI Taxonomy" id="7955"/>
    <lineage>
        <taxon>Eukaryota</taxon>
        <taxon>Metazoa</taxon>
        <taxon>Chordata</taxon>
        <taxon>Craniata</taxon>
        <taxon>Vertebrata</taxon>
        <taxon>Euteleostomi</taxon>
        <taxon>Actinopterygii</taxon>
        <taxon>Neopterygii</taxon>
        <taxon>Teleostei</taxon>
        <taxon>Ostariophysi</taxon>
        <taxon>Cypriniformes</taxon>
        <taxon>Danionidae</taxon>
        <taxon>Danioninae</taxon>
        <taxon>Danio</taxon>
    </lineage>
</organism>
<proteinExistence type="evidence at transcript level"/>
<evidence type="ECO:0000256" key="1">
    <source>
        <dbReference type="SAM" id="MobiDB-lite"/>
    </source>
</evidence>
<evidence type="ECO:0000305" key="2"/>
<gene>
    <name type="primary">cmss1</name>
    <name type="ORF">zgc:101814</name>
</gene>
<reference key="1">
    <citation type="submission" date="2004-10" db="EMBL/GenBank/DDBJ databases">
        <authorList>
            <consortium name="NIH - Zebrafish Gene Collection (ZGC) project"/>
        </authorList>
    </citation>
    <scope>NUCLEOTIDE SEQUENCE [LARGE SCALE MRNA]</scope>
    <source>
        <tissue>Olfactory epithelium</tissue>
    </source>
</reference>
<comment type="similarity">
    <text evidence="2">Belongs to the CMS1 family.</text>
</comment>
<sequence>MADDLGDEWWTQGDNSDVPEVEEETEHAEEKQPIKSTPKKRKVEKQIPDATKKKKATVKKECFITQERSEEKPDNESNKNKKRRKKKKTITDVLTSSKPVPGSPVDLVSLLKTYHSQTRSVIEQEELTLQDSCFLSCNDLTHSLSSYLKEVCPKWAKMQKQHTQTSSVVLLIVCGSALRTIDLIKQLVTFKGQAKVLKLFAKHIKVEEQIKSLSKGVTHIAVGTPGRICALLEKEGLTVQGLRYLVLDWNYRDQKQRRMVDVPEVKGDLLKMMDQGLIQSCREGTVKIGLF</sequence>
<feature type="chain" id="PRO_0000239017" description="Protein CMSS1">
    <location>
        <begin position="1"/>
        <end position="291"/>
    </location>
</feature>
<feature type="region of interest" description="Disordered" evidence="1">
    <location>
        <begin position="1"/>
        <end position="96"/>
    </location>
</feature>
<feature type="compositionally biased region" description="Acidic residues" evidence="1">
    <location>
        <begin position="17"/>
        <end position="27"/>
    </location>
</feature>
<feature type="compositionally biased region" description="Basic and acidic residues" evidence="1">
    <location>
        <begin position="58"/>
        <end position="79"/>
    </location>
</feature>
<name>CMS1_DANRE</name>
<keyword id="KW-1185">Reference proteome</keyword>
<protein>
    <recommendedName>
        <fullName>Protein CMSS1</fullName>
    </recommendedName>
    <alternativeName>
        <fullName>Cms1 ribosomal small subunit homolog</fullName>
    </alternativeName>
</protein>